<protein>
    <recommendedName>
        <fullName>Capsid protein alpha</fullName>
        <ecNumber evidence="2">3.4.23.44</ecNumber>
    </recommendedName>
    <component>
        <recommendedName>
            <fullName>Capsid protein beta</fullName>
        </recommendedName>
        <alternativeName>
            <fullName>Coat protein beta</fullName>
        </alternativeName>
        <alternativeName>
            <fullName>Nodavirus endopeptidase</fullName>
        </alternativeName>
    </component>
    <component>
        <recommendedName>
            <fullName>Membrane-lytic peptide gamma</fullName>
        </recommendedName>
        <alternativeName>
            <fullName>Coat protein gamma</fullName>
        </alternativeName>
    </component>
</protein>
<proteinExistence type="evidence at protein level"/>
<name>CAPSD_PAV</name>
<sequence>MVSRTKNRRNKARKVVSRSTALVPMAPASQRTGPAPRKPRKRNQALVRNPRLTDAGLAFLKCAFAAPDFSVDPGKGIPDNFHGRTLAIKDCNTTSVVFTPNTDTYIVVAPVPGFAYFRAEVAVGAQPTTFVGVPYPTYATNFGAGSQNGLPAVNNYSKFRYASMACGLYPTSNMMQFSGSVQVWRVDLNLSEAVNPAVTAITPAPGVFANFVDKRINGLRGIRPLAPRDNYSGNFIDGAYTFAFDKSTDFEWCDFVRSLEFSESNVLGAATAMKLLAPGGGTDTTLTGLGNVNTLVYKISTPTGAVNTAILRTWNCIELQPYTDSALFQFSGVSPPFDPLALECYHNLKMRFPVAVSSRENSKFWEGVLRVLNQISGTLSVIPGPVGTISAGVHQLTGMYM</sequence>
<keyword id="KW-0002">3D-structure</keyword>
<keyword id="KW-0064">Aspartyl protease</keyword>
<keyword id="KW-0106">Calcium</keyword>
<keyword id="KW-0167">Capsid protein</keyword>
<keyword id="KW-1015">Disulfide bond</keyword>
<keyword id="KW-0378">Hydrolase</keyword>
<keyword id="KW-0479">Metal-binding</keyword>
<keyword id="KW-0645">Protease</keyword>
<keyword id="KW-1142">T=3 icosahedral capsid protein</keyword>
<keyword id="KW-1162">Viral penetration into host cytoplasm</keyword>
<keyword id="KW-1173">Viral penetration via permeabilization of host membrane</keyword>
<keyword id="KW-0946">Virion</keyword>
<keyword id="KW-1160">Virus entry into host cell</keyword>
<evidence type="ECO:0000250" key="1"/>
<evidence type="ECO:0000250" key="2">
    <source>
        <dbReference type="UniProtKB" id="P12870"/>
    </source>
</evidence>
<evidence type="ECO:0000256" key="3">
    <source>
        <dbReference type="SAM" id="MobiDB-lite"/>
    </source>
</evidence>
<evidence type="ECO:0000269" key="4">
    <source>
    </source>
</evidence>
<evidence type="ECO:0000305" key="5"/>
<evidence type="ECO:0007829" key="6">
    <source>
        <dbReference type="PDB" id="1F8V"/>
    </source>
</evidence>
<comment type="function">
    <molecule>Capsid protein alpha</molecule>
    <text evidence="2">Capsid protein alpha self-assembles to form an icosahedral procapsid with a T=3 symmetry, about 30 nm in diameter, and consisting of 60 capsid proteins trimers. In addition, 240 calcium ions are incorporated per capsid during assembly. The capsid encapsulates the two genomic RNAs. Capsid maturation occurs via autoproteolytic cleavage of capsid protein alpha generating capsid protein beta and the membrane-active peptide gamma.</text>
</comment>
<comment type="function">
    <molecule>Membrane-lytic peptide gamma</molecule>
    <text evidence="2">Membrane-permeabilizing peptide produced by virus maturation, thereby creating the infectious virion. After endocytosis into the host cell, peptide gamma is probably exposed in endosomes, where it permeabilizes the endosomal membrane, facilitating translocation of viral capsid or RNA into the cytoplasm. Involved in specific recognition and packaging of viral RNA during assembly.</text>
</comment>
<comment type="catalytic activity">
    <molecule>Capsid protein beta</molecule>
    <reaction evidence="2">
        <text>Hydrolysis of an asparaginyl bond involved in the maturation of the structural protein of the virus, typically -Asn-|-Ala- or -Asn-|-Phe-.</text>
        <dbReference type="EC" id="3.4.23.44"/>
    </reaction>
</comment>
<comment type="subcellular location">
    <molecule>Capsid protein beta</molecule>
    <subcellularLocation>
        <location evidence="5">Virion</location>
    </subcellularLocation>
</comment>
<comment type="subcellular location">
    <molecule>Membrane-lytic peptide gamma</molecule>
    <subcellularLocation>
        <location evidence="5">Virion</location>
    </subcellularLocation>
    <text evidence="5">located inside the capsid.</text>
</comment>
<comment type="PTM">
    <molecule>Capsid protein alpha</molecule>
    <text evidence="2">Capsid protein alpha autocatalytically maturates into capsid protein beta and peptide gamma.</text>
</comment>
<comment type="mass spectrometry">
    <molecule>Membrane-lytic peptide gamma</molecule>
</comment>
<comment type="similarity">
    <text evidence="5">Belongs to the peptidase A6 family.</text>
</comment>
<comment type="online information" name="Virus Particle ExploreR db">
    <link uri="https://viperdb.org/Info_Page.php?VDB=1f8v"/>
    <text>Icosahedral capsid structure</text>
</comment>
<organismHost>
    <name type="scientific">Spodoptera eridania</name>
    <name type="common">Southern armyworm</name>
    <dbReference type="NCBI Taxonomy" id="37547"/>
</organismHost>
<gene>
    <name type="primary">alpha</name>
</gene>
<feature type="chain" id="PRO_0000402390" description="Capsid protein alpha">
    <location>
        <begin position="1"/>
        <end position="401"/>
    </location>
</feature>
<feature type="chain" id="PRO_0000039198" description="Capsid protein beta">
    <location>
        <begin position="1"/>
        <end position="361"/>
    </location>
</feature>
<feature type="chain" id="PRO_0000039199" description="Membrane-lytic peptide gamma">
    <location>
        <begin position="362"/>
        <end position="401"/>
    </location>
</feature>
<feature type="region of interest" description="Disordered" evidence="3">
    <location>
        <begin position="1"/>
        <end position="43"/>
    </location>
</feature>
<feature type="compositionally biased region" description="Basic residues" evidence="3">
    <location>
        <begin position="1"/>
        <end position="16"/>
    </location>
</feature>
<feature type="active site" evidence="2">
    <location>
        <position position="68"/>
    </location>
</feature>
<feature type="binding site" evidence="2">
    <location>
        <position position="249"/>
    </location>
    <ligand>
        <name>Ca(2+)</name>
        <dbReference type="ChEBI" id="CHEBI:29108"/>
        <label>2</label>
    </ligand>
</feature>
<feature type="binding site" evidence="2">
    <location>
        <position position="251"/>
    </location>
    <ligand>
        <name>Ca(2+)</name>
        <dbReference type="ChEBI" id="CHEBI:29108"/>
        <label>2</label>
    </ligand>
</feature>
<feature type="binding site" evidence="2">
    <location>
        <position position="272"/>
    </location>
    <ligand>
        <name>Ca(2+)</name>
        <dbReference type="ChEBI" id="CHEBI:29108"/>
        <label>1</label>
    </ligand>
</feature>
<feature type="binding site" evidence="2">
    <location>
        <position position="272"/>
    </location>
    <ligand>
        <name>Ca(2+)</name>
        <dbReference type="ChEBI" id="CHEBI:29108"/>
        <label>3</label>
    </ligand>
</feature>
<feature type="site" description="Cleavage; by autolysis" evidence="2">
    <location>
        <begin position="361"/>
        <end position="362"/>
    </location>
</feature>
<feature type="disulfide bond" evidence="1">
    <location>
        <begin position="62"/>
        <end position="316"/>
    </location>
</feature>
<feature type="turn" evidence="6">
    <location>
        <begin position="20"/>
        <end position="22"/>
    </location>
</feature>
<feature type="strand" evidence="6">
    <location>
        <begin position="46"/>
        <end position="48"/>
    </location>
</feature>
<feature type="helix" evidence="6">
    <location>
        <begin position="54"/>
        <end position="64"/>
    </location>
</feature>
<feature type="strand" evidence="6">
    <location>
        <begin position="68"/>
        <end position="71"/>
    </location>
</feature>
<feature type="strand" evidence="6">
    <location>
        <begin position="83"/>
        <end position="98"/>
    </location>
</feature>
<feature type="strand" evidence="6">
    <location>
        <begin position="100"/>
        <end position="108"/>
    </location>
</feature>
<feature type="strand" evidence="6">
    <location>
        <begin position="114"/>
        <end position="121"/>
    </location>
</feature>
<feature type="strand" evidence="6">
    <location>
        <begin position="129"/>
        <end position="134"/>
    </location>
</feature>
<feature type="helix" evidence="6">
    <location>
        <begin position="138"/>
        <end position="142"/>
    </location>
</feature>
<feature type="turn" evidence="6">
    <location>
        <begin position="146"/>
        <end position="149"/>
    </location>
</feature>
<feature type="turn" evidence="6">
    <location>
        <begin position="151"/>
        <end position="153"/>
    </location>
</feature>
<feature type="strand" evidence="6">
    <location>
        <begin position="155"/>
        <end position="170"/>
    </location>
</feature>
<feature type="turn" evidence="6">
    <location>
        <begin position="174"/>
        <end position="176"/>
    </location>
</feature>
<feature type="strand" evidence="6">
    <location>
        <begin position="180"/>
        <end position="186"/>
    </location>
</feature>
<feature type="strand" evidence="6">
    <location>
        <begin position="189"/>
        <end position="200"/>
    </location>
</feature>
<feature type="strand" evidence="6">
    <location>
        <begin position="207"/>
        <end position="218"/>
    </location>
</feature>
<feature type="helix" evidence="6">
    <location>
        <begin position="219"/>
        <end position="221"/>
    </location>
</feature>
<feature type="strand" evidence="6">
    <location>
        <begin position="223"/>
        <end position="225"/>
    </location>
</feature>
<feature type="strand" evidence="6">
    <location>
        <begin position="228"/>
        <end position="234"/>
    </location>
</feature>
<feature type="helix" evidence="6">
    <location>
        <begin position="235"/>
        <end position="237"/>
    </location>
</feature>
<feature type="strand" evidence="6">
    <location>
        <begin position="239"/>
        <end position="242"/>
    </location>
</feature>
<feature type="strand" evidence="6">
    <location>
        <begin position="247"/>
        <end position="249"/>
    </location>
</feature>
<feature type="strand" evidence="6">
    <location>
        <begin position="256"/>
        <end position="266"/>
    </location>
</feature>
<feature type="strand" evidence="6">
    <location>
        <begin position="274"/>
        <end position="276"/>
    </location>
</feature>
<feature type="helix" evidence="6">
    <location>
        <begin position="278"/>
        <end position="281"/>
    </location>
</feature>
<feature type="strand" evidence="6">
    <location>
        <begin position="294"/>
        <end position="301"/>
    </location>
</feature>
<feature type="strand" evidence="6">
    <location>
        <begin position="307"/>
        <end position="321"/>
    </location>
</feature>
<feature type="helix" evidence="6">
    <location>
        <begin position="328"/>
        <end position="330"/>
    </location>
</feature>
<feature type="helix" evidence="6">
    <location>
        <begin position="339"/>
        <end position="348"/>
    </location>
</feature>
<feature type="helix" evidence="6">
    <location>
        <begin position="363"/>
        <end position="374"/>
    </location>
</feature>
<feature type="strand" evidence="6">
    <location>
        <begin position="379"/>
        <end position="381"/>
    </location>
</feature>
<dbReference type="EC" id="3.4.23.44" evidence="2"/>
<dbReference type="EMBL" id="AF171943">
    <property type="protein sequence ID" value="AAF71693.1"/>
    <property type="molecule type" value="Genomic_RNA"/>
</dbReference>
<dbReference type="RefSeq" id="NP_620111.1">
    <property type="nucleotide sequence ID" value="NC_003692.1"/>
</dbReference>
<dbReference type="PDB" id="1F8V">
    <property type="method" value="X-ray"/>
    <property type="resolution" value="3.00 A"/>
    <property type="chains" value="A/B/C=7-361, D/E/F=362-401"/>
</dbReference>
<dbReference type="PDBsum" id="1F8V"/>
<dbReference type="SMR" id="Q9J7Z0"/>
<dbReference type="KEGG" id="vg:956349"/>
<dbReference type="OrthoDB" id="10195at10239"/>
<dbReference type="EvolutionaryTrace" id="Q9J7Z0"/>
<dbReference type="Proteomes" id="UP000204174">
    <property type="component" value="Genome"/>
</dbReference>
<dbReference type="GO" id="GO:0039617">
    <property type="term" value="C:T=3 icosahedral viral capsid"/>
    <property type="evidence" value="ECO:0007669"/>
    <property type="project" value="UniProtKB-KW"/>
</dbReference>
<dbReference type="GO" id="GO:0004190">
    <property type="term" value="F:aspartic-type endopeptidase activity"/>
    <property type="evidence" value="ECO:0007669"/>
    <property type="project" value="UniProtKB-KW"/>
</dbReference>
<dbReference type="GO" id="GO:0046872">
    <property type="term" value="F:metal ion binding"/>
    <property type="evidence" value="ECO:0007669"/>
    <property type="project" value="UniProtKB-KW"/>
</dbReference>
<dbReference type="GO" id="GO:0006508">
    <property type="term" value="P:proteolysis"/>
    <property type="evidence" value="ECO:0007669"/>
    <property type="project" value="UniProtKB-KW"/>
</dbReference>
<dbReference type="GO" id="GO:0140267">
    <property type="term" value="P:symbiont entry into host cell via permeabilization of host membrane"/>
    <property type="evidence" value="ECO:0007669"/>
    <property type="project" value="UniProtKB-KW"/>
</dbReference>
<dbReference type="Gene3D" id="2.60.120.20">
    <property type="match status" value="1"/>
</dbReference>
<dbReference type="InterPro" id="IPR000696">
    <property type="entry name" value="Peptidase_A6"/>
</dbReference>
<dbReference type="InterPro" id="IPR029053">
    <property type="entry name" value="Viral_coat"/>
</dbReference>
<dbReference type="Pfam" id="PF01829">
    <property type="entry name" value="Peptidase_A6"/>
    <property type="match status" value="1"/>
</dbReference>
<dbReference type="PRINTS" id="PR00863">
    <property type="entry name" value="NODAVIRPTASE"/>
</dbReference>
<dbReference type="SUPFAM" id="SSF88633">
    <property type="entry name" value="Positive stranded ssRNA viruses"/>
    <property type="match status" value="1"/>
</dbReference>
<organism>
    <name type="scientific">Pariacoto virus</name>
    <name type="common">PaV</name>
    <dbReference type="NCBI Taxonomy" id="103782"/>
    <lineage>
        <taxon>Viruses</taxon>
        <taxon>Riboviria</taxon>
        <taxon>Orthornavirae</taxon>
        <taxon>Kitrinoviricota</taxon>
        <taxon>Magsaviricetes</taxon>
        <taxon>Nodamuvirales</taxon>
        <taxon>Nodaviridae</taxon>
        <taxon>Alphanodavirus</taxon>
    </lineage>
</organism>
<accession>Q9J7Z0</accession>
<reference key="1">
    <citation type="journal article" date="2000" name="J. Virol.">
        <title>Characterization and construction of functional cDNA clones of Pariacoto virus, the first Alphanodavirus isolated outside Australasia.</title>
        <authorList>
            <person name="Johnson K.N."/>
            <person name="Zeddam J.-L."/>
            <person name="Ball L.A."/>
        </authorList>
    </citation>
    <scope>NUCLEOTIDE SEQUENCE [GENOMIC RNA]</scope>
    <scope>MASS SPECTROMETRY</scope>
</reference>
<reference key="2">
    <citation type="journal article" date="2001" name="Nat. Struct. Biol.">
        <title>The structure of pariacoto virus reveals a dodecahedral cage of duplex RNA.</title>
        <authorList>
            <person name="Tang L."/>
            <person name="Johnson K.N."/>
            <person name="Ball L.A."/>
            <person name="Lin T."/>
            <person name="Yeager M."/>
            <person name="Johnson J.E."/>
        </authorList>
    </citation>
    <scope>X-RAY CRYSTALLOGRAPHY (3.0 ANGSTROMS) OF 7-401</scope>
</reference>